<comment type="function">
    <text evidence="1">Functions as a positive effector of cell expansion through modulation of auxin transport.</text>
</comment>
<comment type="subcellular location">
    <subcellularLocation>
        <location evidence="1">Cell membrane</location>
        <topology evidence="1">Peripheral membrane protein</topology>
    </subcellularLocation>
</comment>
<comment type="induction">
    <text evidence="2">By auxin.</text>
</comment>
<comment type="similarity">
    <text evidence="4">Belongs to the ARG7 family.</text>
</comment>
<evidence type="ECO:0000250" key="1">
    <source>
        <dbReference type="UniProtKB" id="Q9FJG1"/>
    </source>
</evidence>
<evidence type="ECO:0000269" key="2">
    <source>
    </source>
</evidence>
<evidence type="ECO:0000303" key="3">
    <source>
    </source>
</evidence>
<evidence type="ECO:0000305" key="4"/>
<evidence type="ECO:0000312" key="5">
    <source>
        <dbReference type="Araport" id="AT5G18050"/>
    </source>
</evidence>
<evidence type="ECO:0000312" key="6">
    <source>
        <dbReference type="EMBL" id="BAB08404.1"/>
    </source>
</evidence>
<protein>
    <recommendedName>
        <fullName evidence="4">Auxin-responsive protein SAUR22</fullName>
    </recommendedName>
    <alternativeName>
        <fullName evidence="3">Protein SMALL AUXIN UP RNA 22</fullName>
    </alternativeName>
</protein>
<accession>Q9FJF7</accession>
<sequence length="90" mass="9843">MALVRSLLGAKKILSRSTAAVSAAPKGFLAVYVGESQKKRYLVPLSYLNQPSFQALLSKSEDEFGFDHPMGGLTIPCHEDTFINVTSRLQ</sequence>
<gene>
    <name evidence="3" type="primary">SAUR22</name>
    <name evidence="5" type="ordered locus">At5g18050</name>
    <name evidence="6" type="ORF">MCM23.15</name>
</gene>
<proteinExistence type="evidence at transcript level"/>
<reference key="1">
    <citation type="journal article" date="1998" name="DNA Res.">
        <title>Structural analysis of Arabidopsis thaliana chromosome 5. VII. Sequence features of the regions of 1,013,767 bp covered by sixteen physically assigned P1 and TAC clones.</title>
        <authorList>
            <person name="Nakamura Y."/>
            <person name="Sato S."/>
            <person name="Asamizu E."/>
            <person name="Kaneko T."/>
            <person name="Kotani H."/>
            <person name="Miyajima N."/>
            <person name="Tabata S."/>
        </authorList>
    </citation>
    <scope>NUCLEOTIDE SEQUENCE [LARGE SCALE GENOMIC DNA]</scope>
    <source>
        <strain>cv. Columbia</strain>
    </source>
</reference>
<reference key="2">
    <citation type="journal article" date="2017" name="Plant J.">
        <title>Araport11: a complete reannotation of the Arabidopsis thaliana reference genome.</title>
        <authorList>
            <person name="Cheng C.Y."/>
            <person name="Krishnakumar V."/>
            <person name="Chan A.P."/>
            <person name="Thibaud-Nissen F."/>
            <person name="Schobel S."/>
            <person name="Town C.D."/>
        </authorList>
    </citation>
    <scope>GENOME REANNOTATION</scope>
    <source>
        <strain>cv. Columbia</strain>
    </source>
</reference>
<reference key="3">
    <citation type="journal article" date="2002" name="Plant Mol. Biol.">
        <title>Auxin-responsive gene expression: genes, promoters and regulatory factors.</title>
        <authorList>
            <person name="Hagen G."/>
            <person name="Guilfoyle T.J."/>
        </authorList>
    </citation>
    <scope>GENE FAMILY</scope>
    <scope>NOMENCLATURE</scope>
</reference>
<reference key="4">
    <citation type="journal article" date="2012" name="Plant J.">
        <title>The SAUR19 subfamily of SMALL AUXIN UP RNA genes promote cell expansion.</title>
        <authorList>
            <person name="Spartz A.K."/>
            <person name="Lee S.H."/>
            <person name="Wenger J.P."/>
            <person name="Gonzalez N."/>
            <person name="Itoh H."/>
            <person name="Inze D."/>
            <person name="Peer W.A."/>
            <person name="Murphy A.S."/>
            <person name="Overvoorde P.J."/>
            <person name="Gray W.M."/>
        </authorList>
    </citation>
    <scope>INDUCTION BY AUXIN</scope>
</reference>
<keyword id="KW-0927">Auxin signaling pathway</keyword>
<keyword id="KW-1003">Cell membrane</keyword>
<keyword id="KW-0217">Developmental protein</keyword>
<keyword id="KW-0341">Growth regulation</keyword>
<keyword id="KW-0472">Membrane</keyword>
<keyword id="KW-1185">Reference proteome</keyword>
<feature type="chain" id="PRO_0000433064" description="Auxin-responsive protein SAUR22">
    <location>
        <begin position="1"/>
        <end position="90"/>
    </location>
</feature>
<organism>
    <name type="scientific">Arabidopsis thaliana</name>
    <name type="common">Mouse-ear cress</name>
    <dbReference type="NCBI Taxonomy" id="3702"/>
    <lineage>
        <taxon>Eukaryota</taxon>
        <taxon>Viridiplantae</taxon>
        <taxon>Streptophyta</taxon>
        <taxon>Embryophyta</taxon>
        <taxon>Tracheophyta</taxon>
        <taxon>Spermatophyta</taxon>
        <taxon>Magnoliopsida</taxon>
        <taxon>eudicotyledons</taxon>
        <taxon>Gunneridae</taxon>
        <taxon>Pentapetalae</taxon>
        <taxon>rosids</taxon>
        <taxon>malvids</taxon>
        <taxon>Brassicales</taxon>
        <taxon>Brassicaceae</taxon>
        <taxon>Camelineae</taxon>
        <taxon>Arabidopsis</taxon>
    </lineage>
</organism>
<name>SAU22_ARATH</name>
<dbReference type="EMBL" id="AB015473">
    <property type="protein sequence ID" value="BAB08404.1"/>
    <property type="molecule type" value="Genomic_DNA"/>
</dbReference>
<dbReference type="EMBL" id="CP002688">
    <property type="protein sequence ID" value="AED92500.1"/>
    <property type="molecule type" value="Genomic_DNA"/>
</dbReference>
<dbReference type="RefSeq" id="NP_197306.1">
    <property type="nucleotide sequence ID" value="NM_121810.3"/>
</dbReference>
<dbReference type="SMR" id="Q9FJF7"/>
<dbReference type="FunCoup" id="Q9FJF7">
    <property type="interactions" value="290"/>
</dbReference>
<dbReference type="STRING" id="3702.Q9FJF7"/>
<dbReference type="PaxDb" id="3702-AT5G18050.1"/>
<dbReference type="EnsemblPlants" id="AT5G18050.1">
    <property type="protein sequence ID" value="AT5G18050.1"/>
    <property type="gene ID" value="AT5G18050"/>
</dbReference>
<dbReference type="GeneID" id="830999"/>
<dbReference type="Gramene" id="AT5G18050.1">
    <property type="protein sequence ID" value="AT5G18050.1"/>
    <property type="gene ID" value="AT5G18050"/>
</dbReference>
<dbReference type="KEGG" id="ath:AT5G18050"/>
<dbReference type="Araport" id="AT5G18050"/>
<dbReference type="TAIR" id="AT5G18050">
    <property type="gene designation" value="SAUR22"/>
</dbReference>
<dbReference type="eggNOG" id="ENOG502STBD">
    <property type="taxonomic scope" value="Eukaryota"/>
</dbReference>
<dbReference type="HOGENOM" id="CLU_098106_3_0_1"/>
<dbReference type="InParanoid" id="Q9FJF7"/>
<dbReference type="OMA" id="RKAEDEC"/>
<dbReference type="PhylomeDB" id="Q9FJF7"/>
<dbReference type="PRO" id="PR:Q9FJF7"/>
<dbReference type="Proteomes" id="UP000006548">
    <property type="component" value="Chromosome 5"/>
</dbReference>
<dbReference type="ExpressionAtlas" id="Q9FJF7">
    <property type="expression patterns" value="baseline and differential"/>
</dbReference>
<dbReference type="GO" id="GO:0005886">
    <property type="term" value="C:plasma membrane"/>
    <property type="evidence" value="ECO:0007669"/>
    <property type="project" value="UniProtKB-SubCell"/>
</dbReference>
<dbReference type="GO" id="GO:0009734">
    <property type="term" value="P:auxin-activated signaling pathway"/>
    <property type="evidence" value="ECO:0007669"/>
    <property type="project" value="UniProtKB-KW"/>
</dbReference>
<dbReference type="InterPro" id="IPR003676">
    <property type="entry name" value="SAUR_fam"/>
</dbReference>
<dbReference type="PANTHER" id="PTHR31929">
    <property type="entry name" value="SAUR-LIKE AUXIN-RESPONSIVE PROTEIN FAMILY-RELATED"/>
    <property type="match status" value="1"/>
</dbReference>
<dbReference type="Pfam" id="PF02519">
    <property type="entry name" value="Auxin_inducible"/>
    <property type="match status" value="1"/>
</dbReference>